<comment type="function">
    <text evidence="1">Catalyzes the sequential NAD-dependent oxidations of L-histidinol to L-histidinaldehyde and then to L-histidine.</text>
</comment>
<comment type="catalytic activity">
    <reaction evidence="1">
        <text>L-histidinol + 2 NAD(+) + H2O = L-histidine + 2 NADH + 3 H(+)</text>
        <dbReference type="Rhea" id="RHEA:20641"/>
        <dbReference type="ChEBI" id="CHEBI:15377"/>
        <dbReference type="ChEBI" id="CHEBI:15378"/>
        <dbReference type="ChEBI" id="CHEBI:57540"/>
        <dbReference type="ChEBI" id="CHEBI:57595"/>
        <dbReference type="ChEBI" id="CHEBI:57699"/>
        <dbReference type="ChEBI" id="CHEBI:57945"/>
        <dbReference type="EC" id="1.1.1.23"/>
    </reaction>
</comment>
<comment type="cofactor">
    <cofactor evidence="1">
        <name>Zn(2+)</name>
        <dbReference type="ChEBI" id="CHEBI:29105"/>
    </cofactor>
    <text evidence="1">Binds 1 zinc ion per subunit.</text>
</comment>
<comment type="pathway">
    <text evidence="1">Amino-acid biosynthesis; L-histidine biosynthesis; L-histidine from 5-phospho-alpha-D-ribose 1-diphosphate: step 9/9.</text>
</comment>
<comment type="similarity">
    <text evidence="1">Belongs to the histidinol dehydrogenase family.</text>
</comment>
<name>HISX_RHORT</name>
<feature type="chain" id="PRO_0000229865" description="Histidinol dehydrogenase">
    <location>
        <begin position="1"/>
        <end position="434"/>
    </location>
</feature>
<feature type="active site" description="Proton acceptor" evidence="1">
    <location>
        <position position="328"/>
    </location>
</feature>
<feature type="active site" description="Proton acceptor" evidence="1">
    <location>
        <position position="329"/>
    </location>
</feature>
<feature type="binding site" evidence="1">
    <location>
        <position position="130"/>
    </location>
    <ligand>
        <name>NAD(+)</name>
        <dbReference type="ChEBI" id="CHEBI:57540"/>
    </ligand>
</feature>
<feature type="binding site" evidence="1">
    <location>
        <position position="191"/>
    </location>
    <ligand>
        <name>NAD(+)</name>
        <dbReference type="ChEBI" id="CHEBI:57540"/>
    </ligand>
</feature>
<feature type="binding site" evidence="1">
    <location>
        <position position="214"/>
    </location>
    <ligand>
        <name>NAD(+)</name>
        <dbReference type="ChEBI" id="CHEBI:57540"/>
    </ligand>
</feature>
<feature type="binding site" evidence="1">
    <location>
        <position position="237"/>
    </location>
    <ligand>
        <name>substrate</name>
    </ligand>
</feature>
<feature type="binding site" evidence="1">
    <location>
        <position position="259"/>
    </location>
    <ligand>
        <name>substrate</name>
    </ligand>
</feature>
<feature type="binding site" evidence="1">
    <location>
        <position position="259"/>
    </location>
    <ligand>
        <name>Zn(2+)</name>
        <dbReference type="ChEBI" id="CHEBI:29105"/>
    </ligand>
</feature>
<feature type="binding site" evidence="1">
    <location>
        <position position="262"/>
    </location>
    <ligand>
        <name>substrate</name>
    </ligand>
</feature>
<feature type="binding site" evidence="1">
    <location>
        <position position="262"/>
    </location>
    <ligand>
        <name>Zn(2+)</name>
        <dbReference type="ChEBI" id="CHEBI:29105"/>
    </ligand>
</feature>
<feature type="binding site" evidence="1">
    <location>
        <position position="329"/>
    </location>
    <ligand>
        <name>substrate</name>
    </ligand>
</feature>
<feature type="binding site" evidence="1">
    <location>
        <position position="362"/>
    </location>
    <ligand>
        <name>substrate</name>
    </ligand>
</feature>
<feature type="binding site" evidence="1">
    <location>
        <position position="362"/>
    </location>
    <ligand>
        <name>Zn(2+)</name>
        <dbReference type="ChEBI" id="CHEBI:29105"/>
    </ligand>
</feature>
<feature type="binding site" evidence="1">
    <location>
        <position position="416"/>
    </location>
    <ligand>
        <name>substrate</name>
    </ligand>
</feature>
<feature type="binding site" evidence="1">
    <location>
        <position position="421"/>
    </location>
    <ligand>
        <name>substrate</name>
    </ligand>
</feature>
<feature type="binding site" evidence="1">
    <location>
        <position position="421"/>
    </location>
    <ligand>
        <name>Zn(2+)</name>
        <dbReference type="ChEBI" id="CHEBI:29105"/>
    </ligand>
</feature>
<protein>
    <recommendedName>
        <fullName evidence="1">Histidinol dehydrogenase</fullName>
        <shortName evidence="1">HDH</shortName>
        <ecNumber evidence="1">1.1.1.23</ecNumber>
    </recommendedName>
</protein>
<sequence length="434" mass="45648">MPLRLEASSADFAPAFAALLAGKRESAQDVNDVVSAILADVRLRGDDALIDYTARFDKMTVSAEGLRFSDDEVDTAVALIEPALRDALALAAKRITRFHERQMPTAISFTDEDGVRLGQRWTAVSAAGLYVPGGLAAYPSSVLMNALPAKVAGVERLVMVVPTPAGRINPLVLAAAKLAGVDEIYRVGGAQAVAALAYGTRTIAPVDKIVGPGNAYVAAAKRQVFGTVGIDMIAGPSEILVVADGANDPDWIALDLLSQAEHDAAAQSILITDDRAFADRVERAVTDRLRTLSRTEIASASWRDHGAIILVGDLLRDAPALVDKVAPEHLELAVADPDALAARVRHAGAIFLGRYTPEAIGDYIAGPNHVLPTSRTARFSSGLGVLDFMKRTTLVGCGAESLGAIGPSAVRLARAEGLEAHGLSVAARMNRGWE</sequence>
<reference key="1">
    <citation type="journal article" date="2011" name="Stand. Genomic Sci.">
        <title>Complete genome sequence of Rhodospirillum rubrum type strain (S1).</title>
        <authorList>
            <person name="Munk A.C."/>
            <person name="Copeland A."/>
            <person name="Lucas S."/>
            <person name="Lapidus A."/>
            <person name="Del Rio T.G."/>
            <person name="Barry K."/>
            <person name="Detter J.C."/>
            <person name="Hammon N."/>
            <person name="Israni S."/>
            <person name="Pitluck S."/>
            <person name="Brettin T."/>
            <person name="Bruce D."/>
            <person name="Han C."/>
            <person name="Tapia R."/>
            <person name="Gilna P."/>
            <person name="Schmutz J."/>
            <person name="Larimer F."/>
            <person name="Land M."/>
            <person name="Kyrpides N.C."/>
            <person name="Mavromatis K."/>
            <person name="Richardson P."/>
            <person name="Rohde M."/>
            <person name="Goeker M."/>
            <person name="Klenk H.P."/>
            <person name="Zhang Y."/>
            <person name="Roberts G.P."/>
            <person name="Reslewic S."/>
            <person name="Schwartz D.C."/>
        </authorList>
    </citation>
    <scope>NUCLEOTIDE SEQUENCE [LARGE SCALE GENOMIC DNA]</scope>
    <source>
        <strain>ATCC 11170 / ATH 1.1.1 / DSM 467 / LMG 4362 / NCIMB 8255 / S1</strain>
    </source>
</reference>
<gene>
    <name evidence="1" type="primary">hisD</name>
    <name type="ordered locus">Rru_A2771</name>
</gene>
<keyword id="KW-0028">Amino-acid biosynthesis</keyword>
<keyword id="KW-0368">Histidine biosynthesis</keyword>
<keyword id="KW-0479">Metal-binding</keyword>
<keyword id="KW-0520">NAD</keyword>
<keyword id="KW-0560">Oxidoreductase</keyword>
<keyword id="KW-1185">Reference proteome</keyword>
<keyword id="KW-0862">Zinc</keyword>
<proteinExistence type="inferred from homology"/>
<accession>Q2RQM7</accession>
<evidence type="ECO:0000255" key="1">
    <source>
        <dbReference type="HAMAP-Rule" id="MF_01024"/>
    </source>
</evidence>
<organism>
    <name type="scientific">Rhodospirillum rubrum (strain ATCC 11170 / ATH 1.1.1 / DSM 467 / LMG 4362 / NCIMB 8255 / S1)</name>
    <dbReference type="NCBI Taxonomy" id="269796"/>
    <lineage>
        <taxon>Bacteria</taxon>
        <taxon>Pseudomonadati</taxon>
        <taxon>Pseudomonadota</taxon>
        <taxon>Alphaproteobacteria</taxon>
        <taxon>Rhodospirillales</taxon>
        <taxon>Rhodospirillaceae</taxon>
        <taxon>Rhodospirillum</taxon>
    </lineage>
</organism>
<dbReference type="EC" id="1.1.1.23" evidence="1"/>
<dbReference type="EMBL" id="CP000230">
    <property type="protein sequence ID" value="ABC23568.1"/>
    <property type="molecule type" value="Genomic_DNA"/>
</dbReference>
<dbReference type="RefSeq" id="WP_011390581.1">
    <property type="nucleotide sequence ID" value="NC_007643.1"/>
</dbReference>
<dbReference type="RefSeq" id="YP_427855.1">
    <property type="nucleotide sequence ID" value="NC_007643.1"/>
</dbReference>
<dbReference type="SMR" id="Q2RQM7"/>
<dbReference type="STRING" id="269796.Rru_A2771"/>
<dbReference type="EnsemblBacteria" id="ABC23568">
    <property type="protein sequence ID" value="ABC23568"/>
    <property type="gene ID" value="Rru_A2771"/>
</dbReference>
<dbReference type="KEGG" id="rru:Rru_A2771"/>
<dbReference type="PATRIC" id="fig|269796.9.peg.2877"/>
<dbReference type="eggNOG" id="COG0141">
    <property type="taxonomic scope" value="Bacteria"/>
</dbReference>
<dbReference type="HOGENOM" id="CLU_006732_3_3_5"/>
<dbReference type="PhylomeDB" id="Q2RQM7"/>
<dbReference type="UniPathway" id="UPA00031">
    <property type="reaction ID" value="UER00014"/>
</dbReference>
<dbReference type="Proteomes" id="UP000001929">
    <property type="component" value="Chromosome"/>
</dbReference>
<dbReference type="GO" id="GO:0005829">
    <property type="term" value="C:cytosol"/>
    <property type="evidence" value="ECO:0007669"/>
    <property type="project" value="TreeGrafter"/>
</dbReference>
<dbReference type="GO" id="GO:0004399">
    <property type="term" value="F:histidinol dehydrogenase activity"/>
    <property type="evidence" value="ECO:0007669"/>
    <property type="project" value="UniProtKB-UniRule"/>
</dbReference>
<dbReference type="GO" id="GO:0051287">
    <property type="term" value="F:NAD binding"/>
    <property type="evidence" value="ECO:0007669"/>
    <property type="project" value="InterPro"/>
</dbReference>
<dbReference type="GO" id="GO:0008270">
    <property type="term" value="F:zinc ion binding"/>
    <property type="evidence" value="ECO:0007669"/>
    <property type="project" value="UniProtKB-UniRule"/>
</dbReference>
<dbReference type="GO" id="GO:0000105">
    <property type="term" value="P:L-histidine biosynthetic process"/>
    <property type="evidence" value="ECO:0007669"/>
    <property type="project" value="UniProtKB-UniRule"/>
</dbReference>
<dbReference type="CDD" id="cd06572">
    <property type="entry name" value="Histidinol_dh"/>
    <property type="match status" value="1"/>
</dbReference>
<dbReference type="FunFam" id="3.40.50.1980:FF:000001">
    <property type="entry name" value="Histidinol dehydrogenase"/>
    <property type="match status" value="1"/>
</dbReference>
<dbReference type="FunFam" id="3.40.50.1980:FF:000026">
    <property type="entry name" value="Histidinol dehydrogenase"/>
    <property type="match status" value="1"/>
</dbReference>
<dbReference type="Gene3D" id="1.20.5.1300">
    <property type="match status" value="1"/>
</dbReference>
<dbReference type="Gene3D" id="3.40.50.1980">
    <property type="entry name" value="Nitrogenase molybdenum iron protein domain"/>
    <property type="match status" value="2"/>
</dbReference>
<dbReference type="HAMAP" id="MF_01024">
    <property type="entry name" value="HisD"/>
    <property type="match status" value="1"/>
</dbReference>
<dbReference type="InterPro" id="IPR016161">
    <property type="entry name" value="Ald_DH/histidinol_DH"/>
</dbReference>
<dbReference type="InterPro" id="IPR001692">
    <property type="entry name" value="Histidinol_DH_CS"/>
</dbReference>
<dbReference type="InterPro" id="IPR022695">
    <property type="entry name" value="Histidinol_DH_monofunct"/>
</dbReference>
<dbReference type="InterPro" id="IPR012131">
    <property type="entry name" value="Hstdl_DH"/>
</dbReference>
<dbReference type="NCBIfam" id="TIGR00069">
    <property type="entry name" value="hisD"/>
    <property type="match status" value="1"/>
</dbReference>
<dbReference type="PANTHER" id="PTHR21256:SF2">
    <property type="entry name" value="HISTIDINE BIOSYNTHESIS TRIFUNCTIONAL PROTEIN"/>
    <property type="match status" value="1"/>
</dbReference>
<dbReference type="PANTHER" id="PTHR21256">
    <property type="entry name" value="HISTIDINOL DEHYDROGENASE HDH"/>
    <property type="match status" value="1"/>
</dbReference>
<dbReference type="Pfam" id="PF00815">
    <property type="entry name" value="Histidinol_dh"/>
    <property type="match status" value="1"/>
</dbReference>
<dbReference type="PIRSF" id="PIRSF000099">
    <property type="entry name" value="Histidinol_dh"/>
    <property type="match status" value="1"/>
</dbReference>
<dbReference type="PRINTS" id="PR00083">
    <property type="entry name" value="HOLDHDRGNASE"/>
</dbReference>
<dbReference type="SUPFAM" id="SSF53720">
    <property type="entry name" value="ALDH-like"/>
    <property type="match status" value="1"/>
</dbReference>
<dbReference type="PROSITE" id="PS00611">
    <property type="entry name" value="HISOL_DEHYDROGENASE"/>
    <property type="match status" value="1"/>
</dbReference>